<organism>
    <name type="scientific">Escherichia coli O157:H7 (strain EC4115 / EHEC)</name>
    <dbReference type="NCBI Taxonomy" id="444450"/>
    <lineage>
        <taxon>Bacteria</taxon>
        <taxon>Pseudomonadati</taxon>
        <taxon>Pseudomonadota</taxon>
        <taxon>Gammaproteobacteria</taxon>
        <taxon>Enterobacterales</taxon>
        <taxon>Enterobacteriaceae</taxon>
        <taxon>Escherichia</taxon>
    </lineage>
</organism>
<evidence type="ECO:0000255" key="1">
    <source>
        <dbReference type="HAMAP-Rule" id="MF_01652"/>
    </source>
</evidence>
<name>MHPA_ECO5E</name>
<dbReference type="EC" id="1.14.13.127" evidence="1"/>
<dbReference type="EMBL" id="CP001164">
    <property type="protein sequence ID" value="ACI36886.1"/>
    <property type="molecule type" value="Genomic_DNA"/>
</dbReference>
<dbReference type="RefSeq" id="WP_001007426.1">
    <property type="nucleotide sequence ID" value="NC_011353.1"/>
</dbReference>
<dbReference type="SMR" id="B5Z2Q2"/>
<dbReference type="KEGG" id="ecf:ECH74115_0422"/>
<dbReference type="HOGENOM" id="CLU_009665_20_2_6"/>
<dbReference type="UniPathway" id="UPA00714"/>
<dbReference type="GO" id="GO:0008688">
    <property type="term" value="F:3-(3-hydroxyphenyl)propionate hydroxylase activity"/>
    <property type="evidence" value="ECO:0007669"/>
    <property type="project" value="UniProtKB-UniRule"/>
</dbReference>
<dbReference type="GO" id="GO:0071949">
    <property type="term" value="F:FAD binding"/>
    <property type="evidence" value="ECO:0007669"/>
    <property type="project" value="InterPro"/>
</dbReference>
<dbReference type="GO" id="GO:0019622">
    <property type="term" value="P:3-(3-hydroxy)phenylpropionate catabolic process"/>
    <property type="evidence" value="ECO:0007669"/>
    <property type="project" value="UniProtKB-UniRule"/>
</dbReference>
<dbReference type="GO" id="GO:0019380">
    <property type="term" value="P:3-phenylpropionate catabolic process"/>
    <property type="evidence" value="ECO:0007669"/>
    <property type="project" value="UniProtKB-UniPathway"/>
</dbReference>
<dbReference type="FunFam" id="3.30.70.2450:FF:000001">
    <property type="entry name" value="3-(3-hydroxy-phenyl)propionate/3-hydroxycinnamic acid hydroxylase"/>
    <property type="match status" value="1"/>
</dbReference>
<dbReference type="FunFam" id="3.50.50.60:FF:000126">
    <property type="entry name" value="3-(3-hydroxy-phenyl)propionate/3-hydroxycinnamic acid hydroxylase"/>
    <property type="match status" value="1"/>
</dbReference>
<dbReference type="Gene3D" id="3.30.70.2450">
    <property type="match status" value="1"/>
</dbReference>
<dbReference type="Gene3D" id="3.50.50.60">
    <property type="entry name" value="FAD/NAD(P)-binding domain"/>
    <property type="match status" value="1"/>
</dbReference>
<dbReference type="HAMAP" id="MF_01652">
    <property type="entry name" value="MhpA"/>
    <property type="match status" value="1"/>
</dbReference>
<dbReference type="InterPro" id="IPR023786">
    <property type="entry name" value="3-HPP/3HCI_hydroxylase"/>
</dbReference>
<dbReference type="InterPro" id="IPR002938">
    <property type="entry name" value="FAD-bd"/>
</dbReference>
<dbReference type="InterPro" id="IPR036188">
    <property type="entry name" value="FAD/NAD-bd_sf"/>
</dbReference>
<dbReference type="InterPro" id="IPR050631">
    <property type="entry name" value="PheA/TfdB_FAD_monoxygenase"/>
</dbReference>
<dbReference type="NCBIfam" id="NF004827">
    <property type="entry name" value="PRK06183.1-1"/>
    <property type="match status" value="1"/>
</dbReference>
<dbReference type="NCBIfam" id="NF004829">
    <property type="entry name" value="PRK06183.1-3"/>
    <property type="match status" value="1"/>
</dbReference>
<dbReference type="NCBIfam" id="NF004831">
    <property type="entry name" value="PRK06183.1-5"/>
    <property type="match status" value="1"/>
</dbReference>
<dbReference type="PANTHER" id="PTHR43476">
    <property type="entry name" value="3-(3-HYDROXY-PHENYL)PROPIONATE/3-HYDROXYCINNAMIC ACID HYDROXYLASE"/>
    <property type="match status" value="1"/>
</dbReference>
<dbReference type="PANTHER" id="PTHR43476:SF3">
    <property type="entry name" value="FAD-BINDING MONOOXYGENASE"/>
    <property type="match status" value="1"/>
</dbReference>
<dbReference type="Pfam" id="PF01494">
    <property type="entry name" value="FAD_binding_3"/>
    <property type="match status" value="1"/>
</dbReference>
<dbReference type="PRINTS" id="PR00420">
    <property type="entry name" value="RNGMNOXGNASE"/>
</dbReference>
<dbReference type="SUPFAM" id="SSF51905">
    <property type="entry name" value="FAD/NAD(P)-binding domain"/>
    <property type="match status" value="1"/>
</dbReference>
<feature type="chain" id="PRO_1000186990" description="3-(3-hydroxy-phenyl)propionate/3-hydroxycinnamic acid hydroxylase">
    <location>
        <begin position="1"/>
        <end position="554"/>
    </location>
</feature>
<feature type="binding site" evidence="1">
    <location>
        <begin position="17"/>
        <end position="46"/>
    </location>
    <ligand>
        <name>FAD</name>
        <dbReference type="ChEBI" id="CHEBI:57692"/>
    </ligand>
</feature>
<feature type="binding site" evidence="1">
    <location>
        <begin position="285"/>
        <end position="295"/>
    </location>
    <ligand>
        <name>FAD</name>
        <dbReference type="ChEBI" id="CHEBI:57692"/>
    </ligand>
</feature>
<accession>B5Z2Q2</accession>
<keyword id="KW-0058">Aromatic hydrocarbons catabolism</keyword>
<keyword id="KW-0274">FAD</keyword>
<keyword id="KW-0285">Flavoprotein</keyword>
<keyword id="KW-0520">NAD</keyword>
<keyword id="KW-0560">Oxidoreductase</keyword>
<protein>
    <recommendedName>
        <fullName evidence="1">3-(3-hydroxy-phenyl)propionate/3-hydroxycinnamic acid hydroxylase</fullName>
        <shortName evidence="1">3-HCI hydroxylase</shortName>
        <shortName evidence="1">3-HPP hydroxylase</shortName>
        <ecNumber evidence="1">1.14.13.127</ecNumber>
    </recommendedName>
</protein>
<gene>
    <name evidence="1" type="primary">mhpA</name>
    <name type="ordered locus">ECH74115_0422</name>
</gene>
<sequence>MAIQHPDIQPAVNHSVQVAIAGAGPVGLMMANYLGQMGIDVLVVEKLDKLIDYPRAIGIDDEALRTMQSVGLVDNVLPHTTPWHAMRFLTPKGRCFADIQPMTDEFGWPRRNAFIQPQVDAVMLEGVSRFPNVRCLFSRELEAFSQQDDEVTLHLKTAEGLREIVKAQWLVACDGGASFVRRTLNVPFEGKTAPNQWIVVDIANDPLSTPHIYLCCDPVRPYVSAALPHAVRRFEFMVMPGETEEQLREPQNMRKLLSKVLPNPDNVELIRQRVYTHNARLAQRFRIDRVLLAGDAAHIMPVWQGQGYNSGMRDAFNLAWKLALVIQGKARDALLDTYQQERRDHAKAMIDLSVTAGNVLAPPKRWQGTLRDGVSWLLNYLPPVKRYFLEMRFKPMPQYYGGALVREGEAKHSPVGKMFIQPKVTLENGDVTLLDNAIGANFAVIGWGCNPLWGMSDEQIQQWRALSTRFIQVVPEVQIHTAQDNHDGVLRVGDTQGRLRSWFAQHNASLVVMRPDRFVAATAIPQTLGKTLNKLASVMTLTRPDADVSVEKVA</sequence>
<reference key="1">
    <citation type="journal article" date="2011" name="Proc. Natl. Acad. Sci. U.S.A.">
        <title>Genomic anatomy of Escherichia coli O157:H7 outbreaks.</title>
        <authorList>
            <person name="Eppinger M."/>
            <person name="Mammel M.K."/>
            <person name="Leclerc J.E."/>
            <person name="Ravel J."/>
            <person name="Cebula T.A."/>
        </authorList>
    </citation>
    <scope>NUCLEOTIDE SEQUENCE [LARGE SCALE GENOMIC DNA]</scope>
    <source>
        <strain>EC4115 / EHEC</strain>
    </source>
</reference>
<comment type="function">
    <text evidence="1">Catalyzes the insertion of one atom of molecular oxygen into position 2 of the phenyl ring of 3-(3-hydroxyphenyl)propionate (3-HPP) and hydroxycinnamic acid (3HCI).</text>
</comment>
<comment type="catalytic activity">
    <reaction evidence="1">
        <text>3-(3-hydroxyphenyl)propanoate + NADH + O2 + H(+) = 3-(2,3-dihydroxyphenyl)propanoate + NAD(+) + H2O</text>
        <dbReference type="Rhea" id="RHEA:24785"/>
        <dbReference type="ChEBI" id="CHEBI:15377"/>
        <dbReference type="ChEBI" id="CHEBI:15378"/>
        <dbReference type="ChEBI" id="CHEBI:15379"/>
        <dbReference type="ChEBI" id="CHEBI:46951"/>
        <dbReference type="ChEBI" id="CHEBI:57277"/>
        <dbReference type="ChEBI" id="CHEBI:57540"/>
        <dbReference type="ChEBI" id="CHEBI:57945"/>
        <dbReference type="EC" id="1.14.13.127"/>
    </reaction>
</comment>
<comment type="catalytic activity">
    <reaction evidence="1">
        <text>(2E)-3-(3-hydroxyphenyl)prop-2-enoate + NADH + O2 + H(+) = (2E)-3-(2,3-dihydroxyphenyl)prop-2-enoate + NAD(+) + H2O</text>
        <dbReference type="Rhea" id="RHEA:27846"/>
        <dbReference type="ChEBI" id="CHEBI:15377"/>
        <dbReference type="ChEBI" id="CHEBI:15378"/>
        <dbReference type="ChEBI" id="CHEBI:15379"/>
        <dbReference type="ChEBI" id="CHEBI:47928"/>
        <dbReference type="ChEBI" id="CHEBI:57540"/>
        <dbReference type="ChEBI" id="CHEBI:57945"/>
        <dbReference type="ChEBI" id="CHEBI:58642"/>
        <dbReference type="EC" id="1.14.13.127"/>
    </reaction>
</comment>
<comment type="cofactor">
    <cofactor evidence="1">
        <name>FAD</name>
        <dbReference type="ChEBI" id="CHEBI:57692"/>
    </cofactor>
</comment>
<comment type="pathway">
    <text evidence="1">Aromatic compound metabolism; 3-phenylpropanoate degradation.</text>
</comment>
<comment type="similarity">
    <text evidence="1">Belongs to the PheA/TfdB FAD monooxygenase family.</text>
</comment>
<proteinExistence type="inferred from homology"/>